<name>SYA_VIBVY</name>
<reference key="1">
    <citation type="journal article" date="2003" name="Genome Res.">
        <title>Comparative genome analysis of Vibrio vulnificus, a marine pathogen.</title>
        <authorList>
            <person name="Chen C.-Y."/>
            <person name="Wu K.-M."/>
            <person name="Chang Y.-C."/>
            <person name="Chang C.-H."/>
            <person name="Tsai H.-C."/>
            <person name="Liao T.-L."/>
            <person name="Liu Y.-M."/>
            <person name="Chen H.-J."/>
            <person name="Shen A.B.-T."/>
            <person name="Li J.-C."/>
            <person name="Su T.-L."/>
            <person name="Shao C.-P."/>
            <person name="Lee C.-T."/>
            <person name="Hor L.-I."/>
            <person name="Tsai S.-F."/>
        </authorList>
    </citation>
    <scope>NUCLEOTIDE SEQUENCE [LARGE SCALE GENOMIC DNA]</scope>
    <source>
        <strain>YJ016</strain>
    </source>
</reference>
<keyword id="KW-0030">Aminoacyl-tRNA synthetase</keyword>
<keyword id="KW-0067">ATP-binding</keyword>
<keyword id="KW-0963">Cytoplasm</keyword>
<keyword id="KW-0436">Ligase</keyword>
<keyword id="KW-0479">Metal-binding</keyword>
<keyword id="KW-0547">Nucleotide-binding</keyword>
<keyword id="KW-0648">Protein biosynthesis</keyword>
<keyword id="KW-0694">RNA-binding</keyword>
<keyword id="KW-0820">tRNA-binding</keyword>
<keyword id="KW-0862">Zinc</keyword>
<dbReference type="EC" id="6.1.1.7" evidence="1"/>
<dbReference type="EMBL" id="BA000037">
    <property type="protein sequence ID" value="BAC95567.1"/>
    <property type="molecule type" value="Genomic_DNA"/>
</dbReference>
<dbReference type="RefSeq" id="WP_011151142.1">
    <property type="nucleotide sequence ID" value="NC_005139.1"/>
</dbReference>
<dbReference type="SMR" id="Q7MHR6"/>
<dbReference type="STRING" id="672.VV93_v1c25140"/>
<dbReference type="KEGG" id="vvy:VV2803"/>
<dbReference type="PATRIC" id="fig|196600.6.peg.2794"/>
<dbReference type="eggNOG" id="COG0013">
    <property type="taxonomic scope" value="Bacteria"/>
</dbReference>
<dbReference type="HOGENOM" id="CLU_004485_1_1_6"/>
<dbReference type="Proteomes" id="UP000002675">
    <property type="component" value="Chromosome I"/>
</dbReference>
<dbReference type="GO" id="GO:0005829">
    <property type="term" value="C:cytosol"/>
    <property type="evidence" value="ECO:0007669"/>
    <property type="project" value="TreeGrafter"/>
</dbReference>
<dbReference type="GO" id="GO:0004813">
    <property type="term" value="F:alanine-tRNA ligase activity"/>
    <property type="evidence" value="ECO:0007669"/>
    <property type="project" value="UniProtKB-UniRule"/>
</dbReference>
<dbReference type="GO" id="GO:0002161">
    <property type="term" value="F:aminoacyl-tRNA deacylase activity"/>
    <property type="evidence" value="ECO:0007669"/>
    <property type="project" value="TreeGrafter"/>
</dbReference>
<dbReference type="GO" id="GO:0005524">
    <property type="term" value="F:ATP binding"/>
    <property type="evidence" value="ECO:0007669"/>
    <property type="project" value="UniProtKB-UniRule"/>
</dbReference>
<dbReference type="GO" id="GO:0000049">
    <property type="term" value="F:tRNA binding"/>
    <property type="evidence" value="ECO:0007669"/>
    <property type="project" value="UniProtKB-KW"/>
</dbReference>
<dbReference type="GO" id="GO:0008270">
    <property type="term" value="F:zinc ion binding"/>
    <property type="evidence" value="ECO:0007669"/>
    <property type="project" value="UniProtKB-UniRule"/>
</dbReference>
<dbReference type="GO" id="GO:0006419">
    <property type="term" value="P:alanyl-tRNA aminoacylation"/>
    <property type="evidence" value="ECO:0007669"/>
    <property type="project" value="UniProtKB-UniRule"/>
</dbReference>
<dbReference type="GO" id="GO:0045892">
    <property type="term" value="P:negative regulation of DNA-templated transcription"/>
    <property type="evidence" value="ECO:0007669"/>
    <property type="project" value="TreeGrafter"/>
</dbReference>
<dbReference type="CDD" id="cd00673">
    <property type="entry name" value="AlaRS_core"/>
    <property type="match status" value="1"/>
</dbReference>
<dbReference type="FunFam" id="2.40.30.130:FF:000001">
    <property type="entry name" value="Alanine--tRNA ligase"/>
    <property type="match status" value="1"/>
</dbReference>
<dbReference type="FunFam" id="3.10.310.40:FF:000001">
    <property type="entry name" value="Alanine--tRNA ligase"/>
    <property type="match status" value="1"/>
</dbReference>
<dbReference type="FunFam" id="3.30.54.20:FF:000001">
    <property type="entry name" value="Alanine--tRNA ligase"/>
    <property type="match status" value="1"/>
</dbReference>
<dbReference type="FunFam" id="3.30.930.10:FF:000004">
    <property type="entry name" value="Alanine--tRNA ligase"/>
    <property type="match status" value="1"/>
</dbReference>
<dbReference type="FunFam" id="3.30.980.10:FF:000004">
    <property type="entry name" value="Alanine--tRNA ligase, cytoplasmic"/>
    <property type="match status" value="1"/>
</dbReference>
<dbReference type="Gene3D" id="2.40.30.130">
    <property type="match status" value="1"/>
</dbReference>
<dbReference type="Gene3D" id="3.10.310.40">
    <property type="match status" value="1"/>
</dbReference>
<dbReference type="Gene3D" id="3.30.54.20">
    <property type="match status" value="1"/>
</dbReference>
<dbReference type="Gene3D" id="3.30.930.10">
    <property type="entry name" value="Bira Bifunctional Protein, Domain 2"/>
    <property type="match status" value="1"/>
</dbReference>
<dbReference type="Gene3D" id="3.30.980.10">
    <property type="entry name" value="Threonyl-trna Synthetase, Chain A, domain 2"/>
    <property type="match status" value="1"/>
</dbReference>
<dbReference type="HAMAP" id="MF_00036_B">
    <property type="entry name" value="Ala_tRNA_synth_B"/>
    <property type="match status" value="1"/>
</dbReference>
<dbReference type="InterPro" id="IPR045864">
    <property type="entry name" value="aa-tRNA-synth_II/BPL/LPL"/>
</dbReference>
<dbReference type="InterPro" id="IPR002318">
    <property type="entry name" value="Ala-tRNA-lgiase_IIc"/>
</dbReference>
<dbReference type="InterPro" id="IPR018162">
    <property type="entry name" value="Ala-tRNA-ligase_IIc_anticod-bd"/>
</dbReference>
<dbReference type="InterPro" id="IPR018165">
    <property type="entry name" value="Ala-tRNA-synth_IIc_core"/>
</dbReference>
<dbReference type="InterPro" id="IPR018164">
    <property type="entry name" value="Ala-tRNA-synth_IIc_N"/>
</dbReference>
<dbReference type="InterPro" id="IPR050058">
    <property type="entry name" value="Ala-tRNA_ligase"/>
</dbReference>
<dbReference type="InterPro" id="IPR023033">
    <property type="entry name" value="Ala_tRNA_ligase_euk/bac"/>
</dbReference>
<dbReference type="InterPro" id="IPR003156">
    <property type="entry name" value="DHHA1_dom"/>
</dbReference>
<dbReference type="InterPro" id="IPR018163">
    <property type="entry name" value="Thr/Ala-tRNA-synth_IIc_edit"/>
</dbReference>
<dbReference type="InterPro" id="IPR009000">
    <property type="entry name" value="Transl_B-barrel_sf"/>
</dbReference>
<dbReference type="InterPro" id="IPR012947">
    <property type="entry name" value="tRNA_SAD"/>
</dbReference>
<dbReference type="NCBIfam" id="TIGR00344">
    <property type="entry name" value="alaS"/>
    <property type="match status" value="1"/>
</dbReference>
<dbReference type="PANTHER" id="PTHR11777:SF9">
    <property type="entry name" value="ALANINE--TRNA LIGASE, CYTOPLASMIC"/>
    <property type="match status" value="1"/>
</dbReference>
<dbReference type="PANTHER" id="PTHR11777">
    <property type="entry name" value="ALANYL-TRNA SYNTHETASE"/>
    <property type="match status" value="1"/>
</dbReference>
<dbReference type="Pfam" id="PF02272">
    <property type="entry name" value="DHHA1"/>
    <property type="match status" value="1"/>
</dbReference>
<dbReference type="Pfam" id="PF01411">
    <property type="entry name" value="tRNA-synt_2c"/>
    <property type="match status" value="1"/>
</dbReference>
<dbReference type="Pfam" id="PF07973">
    <property type="entry name" value="tRNA_SAD"/>
    <property type="match status" value="1"/>
</dbReference>
<dbReference type="PRINTS" id="PR00980">
    <property type="entry name" value="TRNASYNTHALA"/>
</dbReference>
<dbReference type="SMART" id="SM00863">
    <property type="entry name" value="tRNA_SAD"/>
    <property type="match status" value="1"/>
</dbReference>
<dbReference type="SUPFAM" id="SSF55681">
    <property type="entry name" value="Class II aaRS and biotin synthetases"/>
    <property type="match status" value="1"/>
</dbReference>
<dbReference type="SUPFAM" id="SSF101353">
    <property type="entry name" value="Putative anticodon-binding domain of alanyl-tRNA synthetase (AlaRS)"/>
    <property type="match status" value="1"/>
</dbReference>
<dbReference type="SUPFAM" id="SSF55186">
    <property type="entry name" value="ThrRS/AlaRS common domain"/>
    <property type="match status" value="1"/>
</dbReference>
<dbReference type="SUPFAM" id="SSF50447">
    <property type="entry name" value="Translation proteins"/>
    <property type="match status" value="1"/>
</dbReference>
<dbReference type="PROSITE" id="PS50860">
    <property type="entry name" value="AA_TRNA_LIGASE_II_ALA"/>
    <property type="match status" value="1"/>
</dbReference>
<feature type="chain" id="PRO_0000075245" description="Alanine--tRNA ligase">
    <location>
        <begin position="1"/>
        <end position="860"/>
    </location>
</feature>
<feature type="region of interest" description="Disordered" evidence="2">
    <location>
        <begin position="824"/>
        <end position="843"/>
    </location>
</feature>
<feature type="binding site" evidence="1">
    <location>
        <position position="563"/>
    </location>
    <ligand>
        <name>Zn(2+)</name>
        <dbReference type="ChEBI" id="CHEBI:29105"/>
    </ligand>
</feature>
<feature type="binding site" evidence="1">
    <location>
        <position position="567"/>
    </location>
    <ligand>
        <name>Zn(2+)</name>
        <dbReference type="ChEBI" id="CHEBI:29105"/>
    </ligand>
</feature>
<feature type="binding site" evidence="1">
    <location>
        <position position="665"/>
    </location>
    <ligand>
        <name>Zn(2+)</name>
        <dbReference type="ChEBI" id="CHEBI:29105"/>
    </ligand>
</feature>
<feature type="binding site" evidence="1">
    <location>
        <position position="669"/>
    </location>
    <ligand>
        <name>Zn(2+)</name>
        <dbReference type="ChEBI" id="CHEBI:29105"/>
    </ligand>
</feature>
<gene>
    <name evidence="1" type="primary">alaS</name>
    <name type="ordered locus">VV2803</name>
</gene>
<organism>
    <name type="scientific">Vibrio vulnificus (strain YJ016)</name>
    <dbReference type="NCBI Taxonomy" id="196600"/>
    <lineage>
        <taxon>Bacteria</taxon>
        <taxon>Pseudomonadati</taxon>
        <taxon>Pseudomonadota</taxon>
        <taxon>Gammaproteobacteria</taxon>
        <taxon>Vibrionales</taxon>
        <taxon>Vibrionaceae</taxon>
        <taxon>Vibrio</taxon>
    </lineage>
</organism>
<accession>Q7MHR6</accession>
<proteinExistence type="inferred from homology"/>
<comment type="function">
    <text evidence="1">Catalyzes the attachment of alanine to tRNA(Ala) in a two-step reaction: alanine is first activated by ATP to form Ala-AMP and then transferred to the acceptor end of tRNA(Ala). Also edits incorrectly charged Ser-tRNA(Ala) and Gly-tRNA(Ala) via its editing domain.</text>
</comment>
<comment type="catalytic activity">
    <reaction evidence="1">
        <text>tRNA(Ala) + L-alanine + ATP = L-alanyl-tRNA(Ala) + AMP + diphosphate</text>
        <dbReference type="Rhea" id="RHEA:12540"/>
        <dbReference type="Rhea" id="RHEA-COMP:9657"/>
        <dbReference type="Rhea" id="RHEA-COMP:9923"/>
        <dbReference type="ChEBI" id="CHEBI:30616"/>
        <dbReference type="ChEBI" id="CHEBI:33019"/>
        <dbReference type="ChEBI" id="CHEBI:57972"/>
        <dbReference type="ChEBI" id="CHEBI:78442"/>
        <dbReference type="ChEBI" id="CHEBI:78497"/>
        <dbReference type="ChEBI" id="CHEBI:456215"/>
        <dbReference type="EC" id="6.1.1.7"/>
    </reaction>
</comment>
<comment type="cofactor">
    <cofactor evidence="1">
        <name>Zn(2+)</name>
        <dbReference type="ChEBI" id="CHEBI:29105"/>
    </cofactor>
    <text evidence="1">Binds 1 zinc ion per subunit.</text>
</comment>
<comment type="subcellular location">
    <subcellularLocation>
        <location evidence="1">Cytoplasm</location>
    </subcellularLocation>
</comment>
<comment type="domain">
    <text evidence="1">Consists of three domains; the N-terminal catalytic domain, the editing domain and the C-terminal C-Ala domain. The editing domain removes incorrectly charged amino acids, while the C-Ala domain, along with tRNA(Ala), serves as a bridge to cooperatively bring together the editing and aminoacylation centers thus stimulating deacylation of misacylated tRNAs.</text>
</comment>
<comment type="similarity">
    <text evidence="1">Belongs to the class-II aminoacyl-tRNA synthetase family.</text>
</comment>
<sequence>MYMSTDEVRNAFLKFFESKGHQIVDSSSLVPHNDPTLLFTNAGMNQFKDCFLGAEKRAYTRATTAQRCVRAGGKHNDLENVGFTARHHTFFEMLGNFSFGDYFKEDAIAFAWEFLTETLKLPKDRLLVTVYETDDEAFDIWNQKVGVPADRIIRIGDKKGGKQYESDNFWTMGDTGPCGPCTEIFYDHGEHIWGGRPGTPEEDGDRFIEIWNNVFMQFNRHADGTMEPLPKPSVDTGMGIERISAIMQGVHSNYEIDVFQKLIKATAEIVGCEDLSNQSLRVIADHIRSCSFLIADGVMPSNEGRGYVLRRIIRRAVRHGNKLGAQGVFFHKLVGVLAEVMGSAADELKKQQAVVEKVLRIEEENFGRTLERGMVILNEALDALEGKELDGETVFKLYDTYGFPADLTNDVARERDFTIDEAGFEKAMEEQRQRAREAGQFGTDYNAKIKVDAQSEFCGYTSTQERSDVVALFVEGEETATLSAGDKAIVILQETPFYAESGGQCGDSGVLKTESGLFQVEDTQKLGNAIAHHGVLVEGVLAKGDQVTAIVDAERRAAISLNHSATHLLHAALRQVLGEHVAQKGSLVKAENLRFDFSHLEAVTAAELKEVERLVNAQIRRNHTIETNIMDIESAKQKGAMALFGEKYDDEVRVLSMGDFSTELCGGIHASNTGDIGLFKITSEGGIAAGIRRIEAVTGEAALEAIDAQARKFEEKLQDAANKAKSLEKEIQQLKDKLASQASANLIDQVKEIAGVKVLVAKLDGADNKALRGMVDELKNQMGSGIIMLGNVADDKVGLIAGVTQDLTSKVKAGELVNMVAQQVGGKGGGRPDMAQAGGTDSSALPSALASVDAWIAERL</sequence>
<evidence type="ECO:0000255" key="1">
    <source>
        <dbReference type="HAMAP-Rule" id="MF_00036"/>
    </source>
</evidence>
<evidence type="ECO:0000256" key="2">
    <source>
        <dbReference type="SAM" id="MobiDB-lite"/>
    </source>
</evidence>
<protein>
    <recommendedName>
        <fullName evidence="1">Alanine--tRNA ligase</fullName>
        <ecNumber evidence="1">6.1.1.7</ecNumber>
    </recommendedName>
    <alternativeName>
        <fullName evidence="1">Alanyl-tRNA synthetase</fullName>
        <shortName evidence="1">AlaRS</shortName>
    </alternativeName>
</protein>